<reference key="1">
    <citation type="journal article" date="2006" name="Genome Biol.">
        <title>The genome of Rhizobium leguminosarum has recognizable core and accessory components.</title>
        <authorList>
            <person name="Young J.P.W."/>
            <person name="Crossman L.C."/>
            <person name="Johnston A.W.B."/>
            <person name="Thomson N.R."/>
            <person name="Ghazoui Z.F."/>
            <person name="Hull K.H."/>
            <person name="Wexler M."/>
            <person name="Curson A.R.J."/>
            <person name="Todd J.D."/>
            <person name="Poole P.S."/>
            <person name="Mauchline T.H."/>
            <person name="East A.K."/>
            <person name="Quail M.A."/>
            <person name="Churcher C."/>
            <person name="Arrowsmith C."/>
            <person name="Cherevach I."/>
            <person name="Chillingworth T."/>
            <person name="Clarke K."/>
            <person name="Cronin A."/>
            <person name="Davis P."/>
            <person name="Fraser A."/>
            <person name="Hance Z."/>
            <person name="Hauser H."/>
            <person name="Jagels K."/>
            <person name="Moule S."/>
            <person name="Mungall K."/>
            <person name="Norbertczak H."/>
            <person name="Rabbinowitsch E."/>
            <person name="Sanders M."/>
            <person name="Simmonds M."/>
            <person name="Whitehead S."/>
            <person name="Parkhill J."/>
        </authorList>
    </citation>
    <scope>NUCLEOTIDE SEQUENCE [LARGE SCALE GENOMIC DNA]</scope>
    <source>
        <strain>DSM 114642 / LMG 32736 / 3841</strain>
    </source>
</reference>
<proteinExistence type="inferred from homology"/>
<protein>
    <recommendedName>
        <fullName evidence="1">Protein-glutamate methylesterase/protein-glutamine glutaminase 1</fullName>
        <ecNumber evidence="1">3.1.1.61</ecNumber>
        <ecNumber evidence="1">3.5.1.44</ecNumber>
    </recommendedName>
</protein>
<dbReference type="EC" id="3.1.1.61" evidence="1"/>
<dbReference type="EC" id="3.5.1.44" evidence="1"/>
<dbReference type="EMBL" id="AM236080">
    <property type="protein sequence ID" value="CAK06185.1"/>
    <property type="molecule type" value="Genomic_DNA"/>
</dbReference>
<dbReference type="SMR" id="Q1MLG8"/>
<dbReference type="EnsemblBacteria" id="CAK06185">
    <property type="protein sequence ID" value="CAK06185"/>
    <property type="gene ID" value="RL0691"/>
</dbReference>
<dbReference type="KEGG" id="rle:RL0691"/>
<dbReference type="eggNOG" id="COG2201">
    <property type="taxonomic scope" value="Bacteria"/>
</dbReference>
<dbReference type="HOGENOM" id="CLU_000445_51_0_5"/>
<dbReference type="Proteomes" id="UP000006575">
    <property type="component" value="Chromosome"/>
</dbReference>
<dbReference type="GO" id="GO:0005737">
    <property type="term" value="C:cytoplasm"/>
    <property type="evidence" value="ECO:0007669"/>
    <property type="project" value="UniProtKB-SubCell"/>
</dbReference>
<dbReference type="GO" id="GO:0000156">
    <property type="term" value="F:phosphorelay response regulator activity"/>
    <property type="evidence" value="ECO:0007669"/>
    <property type="project" value="InterPro"/>
</dbReference>
<dbReference type="GO" id="GO:0008984">
    <property type="term" value="F:protein-glutamate methylesterase activity"/>
    <property type="evidence" value="ECO:0007669"/>
    <property type="project" value="UniProtKB-UniRule"/>
</dbReference>
<dbReference type="GO" id="GO:0050568">
    <property type="term" value="F:protein-glutamine glutaminase activity"/>
    <property type="evidence" value="ECO:0007669"/>
    <property type="project" value="UniProtKB-UniRule"/>
</dbReference>
<dbReference type="GO" id="GO:0006935">
    <property type="term" value="P:chemotaxis"/>
    <property type="evidence" value="ECO:0007669"/>
    <property type="project" value="UniProtKB-UniRule"/>
</dbReference>
<dbReference type="CDD" id="cd16432">
    <property type="entry name" value="CheB_Rec"/>
    <property type="match status" value="1"/>
</dbReference>
<dbReference type="CDD" id="cd17541">
    <property type="entry name" value="REC_CheB-like"/>
    <property type="match status" value="1"/>
</dbReference>
<dbReference type="Gene3D" id="3.40.50.2300">
    <property type="match status" value="1"/>
</dbReference>
<dbReference type="Gene3D" id="3.40.50.180">
    <property type="entry name" value="Methylesterase CheB, C-terminal domain"/>
    <property type="match status" value="1"/>
</dbReference>
<dbReference type="HAMAP" id="MF_00099">
    <property type="entry name" value="CheB_chemtxs"/>
    <property type="match status" value="1"/>
</dbReference>
<dbReference type="InterPro" id="IPR008248">
    <property type="entry name" value="CheB-like"/>
</dbReference>
<dbReference type="InterPro" id="IPR035909">
    <property type="entry name" value="CheB_C"/>
</dbReference>
<dbReference type="InterPro" id="IPR011006">
    <property type="entry name" value="CheY-like_superfamily"/>
</dbReference>
<dbReference type="InterPro" id="IPR000673">
    <property type="entry name" value="Sig_transdc_resp-reg_Me-estase"/>
</dbReference>
<dbReference type="InterPro" id="IPR001789">
    <property type="entry name" value="Sig_transdc_resp-reg_receiver"/>
</dbReference>
<dbReference type="NCBIfam" id="NF001965">
    <property type="entry name" value="PRK00742.1"/>
    <property type="match status" value="1"/>
</dbReference>
<dbReference type="NCBIfam" id="NF009206">
    <property type="entry name" value="PRK12555.1"/>
    <property type="match status" value="1"/>
</dbReference>
<dbReference type="PANTHER" id="PTHR42872">
    <property type="entry name" value="PROTEIN-GLUTAMATE METHYLESTERASE/PROTEIN-GLUTAMINE GLUTAMINASE"/>
    <property type="match status" value="1"/>
</dbReference>
<dbReference type="PANTHER" id="PTHR42872:SF6">
    <property type="entry name" value="PROTEIN-GLUTAMATE METHYLESTERASE_PROTEIN-GLUTAMINE GLUTAMINASE"/>
    <property type="match status" value="1"/>
</dbReference>
<dbReference type="Pfam" id="PF01339">
    <property type="entry name" value="CheB_methylest"/>
    <property type="match status" value="1"/>
</dbReference>
<dbReference type="Pfam" id="PF00072">
    <property type="entry name" value="Response_reg"/>
    <property type="match status" value="1"/>
</dbReference>
<dbReference type="PIRSF" id="PIRSF000876">
    <property type="entry name" value="RR_chemtxs_CheB"/>
    <property type="match status" value="1"/>
</dbReference>
<dbReference type="SMART" id="SM00448">
    <property type="entry name" value="REC"/>
    <property type="match status" value="1"/>
</dbReference>
<dbReference type="SUPFAM" id="SSF52172">
    <property type="entry name" value="CheY-like"/>
    <property type="match status" value="1"/>
</dbReference>
<dbReference type="SUPFAM" id="SSF52738">
    <property type="entry name" value="Methylesterase CheB, C-terminal domain"/>
    <property type="match status" value="1"/>
</dbReference>
<dbReference type="PROSITE" id="PS50122">
    <property type="entry name" value="CHEB"/>
    <property type="match status" value="1"/>
</dbReference>
<dbReference type="PROSITE" id="PS50110">
    <property type="entry name" value="RESPONSE_REGULATORY"/>
    <property type="match status" value="1"/>
</dbReference>
<evidence type="ECO:0000255" key="1">
    <source>
        <dbReference type="HAMAP-Rule" id="MF_00099"/>
    </source>
</evidence>
<feature type="chain" id="PRO_0000264302" description="Protein-glutamate methylesterase/protein-glutamine glutaminase 1">
    <location>
        <begin position="1"/>
        <end position="347"/>
    </location>
</feature>
<feature type="domain" description="Response regulatory" evidence="1">
    <location>
        <begin position="6"/>
        <end position="123"/>
    </location>
</feature>
<feature type="domain" description="CheB-type methylesterase" evidence="1">
    <location>
        <begin position="150"/>
        <end position="342"/>
    </location>
</feature>
<feature type="active site" evidence="1">
    <location>
        <position position="162"/>
    </location>
</feature>
<feature type="active site" evidence="1">
    <location>
        <position position="188"/>
    </location>
</feature>
<feature type="active site" evidence="1">
    <location>
        <position position="284"/>
    </location>
</feature>
<feature type="modified residue" description="4-aspartylphosphate" evidence="1">
    <location>
        <position position="57"/>
    </location>
</feature>
<comment type="function">
    <text evidence="1">Involved in chemotaxis. Part of a chemotaxis signal transduction system that modulates chemotaxis in response to various stimuli. Catalyzes the demethylation of specific methylglutamate residues introduced into the chemoreceptors (methyl-accepting chemotaxis proteins or MCP) by CheR. Also mediates the irreversible deamidation of specific glutamine residues to glutamic acid.</text>
</comment>
<comment type="catalytic activity">
    <reaction evidence="1">
        <text>[protein]-L-glutamate 5-O-methyl ester + H2O = L-glutamyl-[protein] + methanol + H(+)</text>
        <dbReference type="Rhea" id="RHEA:23236"/>
        <dbReference type="Rhea" id="RHEA-COMP:10208"/>
        <dbReference type="Rhea" id="RHEA-COMP:10311"/>
        <dbReference type="ChEBI" id="CHEBI:15377"/>
        <dbReference type="ChEBI" id="CHEBI:15378"/>
        <dbReference type="ChEBI" id="CHEBI:17790"/>
        <dbReference type="ChEBI" id="CHEBI:29973"/>
        <dbReference type="ChEBI" id="CHEBI:82795"/>
        <dbReference type="EC" id="3.1.1.61"/>
    </reaction>
</comment>
<comment type="catalytic activity">
    <reaction evidence="1">
        <text>L-glutaminyl-[protein] + H2O = L-glutamyl-[protein] + NH4(+)</text>
        <dbReference type="Rhea" id="RHEA:16441"/>
        <dbReference type="Rhea" id="RHEA-COMP:10207"/>
        <dbReference type="Rhea" id="RHEA-COMP:10208"/>
        <dbReference type="ChEBI" id="CHEBI:15377"/>
        <dbReference type="ChEBI" id="CHEBI:28938"/>
        <dbReference type="ChEBI" id="CHEBI:29973"/>
        <dbReference type="ChEBI" id="CHEBI:30011"/>
        <dbReference type="EC" id="3.5.1.44"/>
    </reaction>
</comment>
<comment type="subcellular location">
    <subcellularLocation>
        <location evidence="1">Cytoplasm</location>
    </subcellularLocation>
</comment>
<comment type="domain">
    <text evidence="1">Contains a C-terminal catalytic domain, and an N-terminal region which modulates catalytic activity.</text>
</comment>
<comment type="PTM">
    <text evidence="1">Phosphorylated by CheA. Phosphorylation of the N-terminal regulatory domain activates the methylesterase activity.</text>
</comment>
<comment type="similarity">
    <text evidence="1">Belongs to the CheB family.</text>
</comment>
<organism>
    <name type="scientific">Rhizobium johnstonii (strain DSM 114642 / LMG 32736 / 3841)</name>
    <name type="common">Rhizobium leguminosarum bv. viciae</name>
    <dbReference type="NCBI Taxonomy" id="216596"/>
    <lineage>
        <taxon>Bacteria</taxon>
        <taxon>Pseudomonadati</taxon>
        <taxon>Pseudomonadota</taxon>
        <taxon>Alphaproteobacteria</taxon>
        <taxon>Hyphomicrobiales</taxon>
        <taxon>Rhizobiaceae</taxon>
        <taxon>Rhizobium/Agrobacterium group</taxon>
        <taxon>Rhizobium</taxon>
        <taxon>Rhizobium johnstonii</taxon>
    </lineage>
</organism>
<name>CHEB1_RHIJ3</name>
<gene>
    <name evidence="1" type="primary">cheB1</name>
    <name type="ordered locus">RL0691</name>
</gene>
<keyword id="KW-0145">Chemotaxis</keyword>
<keyword id="KW-0963">Cytoplasm</keyword>
<keyword id="KW-0378">Hydrolase</keyword>
<keyword id="KW-0597">Phosphoprotein</keyword>
<accession>Q1MLG8</accession>
<sequence length="347" mass="36689">MSAPARVLVVDDSATMRGLITAVLSSDPEVNVIGQAGDALEAREAIKRLNPDVLTLDIEMPNMNGLDFLEKIMTLRPMPVIMVSTMTHRGAEATLAALEIGAFDCVGKPAPGELRPFGDLAEKVKAAARTQRQYSQPVVAVAPPPSVADFRVGRKIVAIGSSTGGVEALIAVLQKFPANCPPTVITQHMPPTFTKSFAERLNRLCAPVVQEATDGARLEIGKIYLAPGGERHLQVSGASAPCCRLIDRAPVNGHRPSVDVLFDSVAELAGRNAVGVILTGMGRDGAAGLLKMRHAGARTLGQNEKTCVVYGMPRVAHELGAVEQQLPLSAIGEEILKMTAARKEGTE</sequence>